<feature type="chain" id="PRO_1000018458" description="Indole-3-glycerol phosphate synthase">
    <location>
        <begin position="1"/>
        <end position="261"/>
    </location>
</feature>
<dbReference type="EC" id="4.1.1.48" evidence="1"/>
<dbReference type="EMBL" id="CP000572">
    <property type="protein sequence ID" value="ABN92033.1"/>
    <property type="molecule type" value="Genomic_DNA"/>
</dbReference>
<dbReference type="RefSeq" id="WP_004522001.1">
    <property type="nucleotide sequence ID" value="NC_009076.1"/>
</dbReference>
<dbReference type="SMR" id="A3NZP6"/>
<dbReference type="GeneID" id="93061661"/>
<dbReference type="KEGG" id="bpl:BURPS1106A_3586"/>
<dbReference type="HOGENOM" id="CLU_034247_2_0_4"/>
<dbReference type="UniPathway" id="UPA00035">
    <property type="reaction ID" value="UER00043"/>
</dbReference>
<dbReference type="Proteomes" id="UP000006738">
    <property type="component" value="Chromosome I"/>
</dbReference>
<dbReference type="GO" id="GO:0004425">
    <property type="term" value="F:indole-3-glycerol-phosphate synthase activity"/>
    <property type="evidence" value="ECO:0007669"/>
    <property type="project" value="UniProtKB-UniRule"/>
</dbReference>
<dbReference type="GO" id="GO:0004640">
    <property type="term" value="F:phosphoribosylanthranilate isomerase activity"/>
    <property type="evidence" value="ECO:0007669"/>
    <property type="project" value="TreeGrafter"/>
</dbReference>
<dbReference type="GO" id="GO:0000162">
    <property type="term" value="P:L-tryptophan biosynthetic process"/>
    <property type="evidence" value="ECO:0007669"/>
    <property type="project" value="UniProtKB-UniRule"/>
</dbReference>
<dbReference type="CDD" id="cd00331">
    <property type="entry name" value="IGPS"/>
    <property type="match status" value="1"/>
</dbReference>
<dbReference type="FunFam" id="3.20.20.70:FF:000024">
    <property type="entry name" value="Indole-3-glycerol phosphate synthase"/>
    <property type="match status" value="1"/>
</dbReference>
<dbReference type="Gene3D" id="3.20.20.70">
    <property type="entry name" value="Aldolase class I"/>
    <property type="match status" value="1"/>
</dbReference>
<dbReference type="HAMAP" id="MF_00134_B">
    <property type="entry name" value="IGPS_B"/>
    <property type="match status" value="1"/>
</dbReference>
<dbReference type="InterPro" id="IPR013785">
    <property type="entry name" value="Aldolase_TIM"/>
</dbReference>
<dbReference type="InterPro" id="IPR045186">
    <property type="entry name" value="Indole-3-glycerol_P_synth"/>
</dbReference>
<dbReference type="InterPro" id="IPR013798">
    <property type="entry name" value="Indole-3-glycerol_P_synth_dom"/>
</dbReference>
<dbReference type="InterPro" id="IPR001468">
    <property type="entry name" value="Indole-3-GlycerolPSynthase_CS"/>
</dbReference>
<dbReference type="InterPro" id="IPR011060">
    <property type="entry name" value="RibuloseP-bd_barrel"/>
</dbReference>
<dbReference type="NCBIfam" id="NF001373">
    <property type="entry name" value="PRK00278.1-6"/>
    <property type="match status" value="1"/>
</dbReference>
<dbReference type="NCBIfam" id="NF001377">
    <property type="entry name" value="PRK00278.2-4"/>
    <property type="match status" value="1"/>
</dbReference>
<dbReference type="PANTHER" id="PTHR22854:SF2">
    <property type="entry name" value="INDOLE-3-GLYCEROL-PHOSPHATE SYNTHASE"/>
    <property type="match status" value="1"/>
</dbReference>
<dbReference type="PANTHER" id="PTHR22854">
    <property type="entry name" value="TRYPTOPHAN BIOSYNTHESIS PROTEIN"/>
    <property type="match status" value="1"/>
</dbReference>
<dbReference type="Pfam" id="PF00218">
    <property type="entry name" value="IGPS"/>
    <property type="match status" value="1"/>
</dbReference>
<dbReference type="SUPFAM" id="SSF51366">
    <property type="entry name" value="Ribulose-phoshate binding barrel"/>
    <property type="match status" value="1"/>
</dbReference>
<dbReference type="PROSITE" id="PS00614">
    <property type="entry name" value="IGPS"/>
    <property type="match status" value="1"/>
</dbReference>
<protein>
    <recommendedName>
        <fullName evidence="1">Indole-3-glycerol phosphate synthase</fullName>
        <shortName evidence="1">IGPS</shortName>
        <ecNumber evidence="1">4.1.1.48</ecNumber>
    </recommendedName>
</protein>
<organism>
    <name type="scientific">Burkholderia pseudomallei (strain 1106a)</name>
    <dbReference type="NCBI Taxonomy" id="357348"/>
    <lineage>
        <taxon>Bacteria</taxon>
        <taxon>Pseudomonadati</taxon>
        <taxon>Pseudomonadota</taxon>
        <taxon>Betaproteobacteria</taxon>
        <taxon>Burkholderiales</taxon>
        <taxon>Burkholderiaceae</taxon>
        <taxon>Burkholderia</taxon>
        <taxon>pseudomallei group</taxon>
    </lineage>
</organism>
<keyword id="KW-0028">Amino-acid biosynthesis</keyword>
<keyword id="KW-0057">Aromatic amino acid biosynthesis</keyword>
<keyword id="KW-0210">Decarboxylase</keyword>
<keyword id="KW-0456">Lyase</keyword>
<keyword id="KW-0822">Tryptophan biosynthesis</keyword>
<name>TRPC_BURP0</name>
<accession>A3NZP6</accession>
<comment type="catalytic activity">
    <reaction evidence="1">
        <text>1-(2-carboxyphenylamino)-1-deoxy-D-ribulose 5-phosphate + H(+) = (1S,2R)-1-C-(indol-3-yl)glycerol 3-phosphate + CO2 + H2O</text>
        <dbReference type="Rhea" id="RHEA:23476"/>
        <dbReference type="ChEBI" id="CHEBI:15377"/>
        <dbReference type="ChEBI" id="CHEBI:15378"/>
        <dbReference type="ChEBI" id="CHEBI:16526"/>
        <dbReference type="ChEBI" id="CHEBI:58613"/>
        <dbReference type="ChEBI" id="CHEBI:58866"/>
        <dbReference type="EC" id="4.1.1.48"/>
    </reaction>
</comment>
<comment type="pathway">
    <text evidence="1">Amino-acid biosynthesis; L-tryptophan biosynthesis; L-tryptophan from chorismate: step 4/5.</text>
</comment>
<comment type="similarity">
    <text evidence="1">Belongs to the TrpC family.</text>
</comment>
<sequence length="261" mass="28305">MSDILDKIIAVKREEIAAALESAPLEELKVQASARDSRDFVGALRDKHAAGHAAVIAEVKKASPSKGVLREHFVPADIARSYAQHGAACLSVLTDERFFQGSARYLEQARAACALPVLRKDFIVDAYQVLEARAMGADAILLIAAALDTPLMIDLEAYAHSLGLAVLVEVHNRGELDEALKLKTPLVGINNRNLRTFETTIDTTLGMLDAIPDDRIVVTESGILSRADVERMEAAGVHTFLVGEAFMRAENPGAELARMFF</sequence>
<gene>
    <name evidence="1" type="primary">trpC</name>
    <name type="ordered locus">BURPS1106A_3586</name>
</gene>
<proteinExistence type="inferred from homology"/>
<evidence type="ECO:0000255" key="1">
    <source>
        <dbReference type="HAMAP-Rule" id="MF_00134"/>
    </source>
</evidence>
<reference key="1">
    <citation type="journal article" date="2010" name="Genome Biol. Evol.">
        <title>Continuing evolution of Burkholderia mallei through genome reduction and large-scale rearrangements.</title>
        <authorList>
            <person name="Losada L."/>
            <person name="Ronning C.M."/>
            <person name="DeShazer D."/>
            <person name="Woods D."/>
            <person name="Fedorova N."/>
            <person name="Kim H.S."/>
            <person name="Shabalina S.A."/>
            <person name="Pearson T.R."/>
            <person name="Brinkac L."/>
            <person name="Tan P."/>
            <person name="Nandi T."/>
            <person name="Crabtree J."/>
            <person name="Badger J."/>
            <person name="Beckstrom-Sternberg S."/>
            <person name="Saqib M."/>
            <person name="Schutzer S.E."/>
            <person name="Keim P."/>
            <person name="Nierman W.C."/>
        </authorList>
    </citation>
    <scope>NUCLEOTIDE SEQUENCE [LARGE SCALE GENOMIC DNA]</scope>
    <source>
        <strain>1106a</strain>
    </source>
</reference>